<evidence type="ECO:0000250" key="1">
    <source>
        <dbReference type="UniProtKB" id="P54900"/>
    </source>
</evidence>
<evidence type="ECO:0000255" key="2"/>
<evidence type="ECO:0000256" key="3">
    <source>
        <dbReference type="SAM" id="MobiDB-lite"/>
    </source>
</evidence>
<evidence type="ECO:0000269" key="4">
    <source>
    </source>
</evidence>
<evidence type="ECO:0000269" key="5">
    <source>
    </source>
</evidence>
<evidence type="ECO:0000269" key="6">
    <source>
    </source>
</evidence>
<evidence type="ECO:0000269" key="7">
    <source>
    </source>
</evidence>
<evidence type="ECO:0000269" key="8">
    <source>
    </source>
</evidence>
<evidence type="ECO:0000269" key="9">
    <source>
    </source>
</evidence>
<evidence type="ECO:0000269" key="10">
    <source>
    </source>
</evidence>
<evidence type="ECO:0000269" key="11">
    <source>
    </source>
</evidence>
<evidence type="ECO:0000305" key="12"/>
<evidence type="ECO:0000305" key="13">
    <source>
    </source>
</evidence>
<evidence type="ECO:0000305" key="14">
    <source>
    </source>
</evidence>
<evidence type="ECO:0000305" key="15">
    <source>
    </source>
</evidence>
<evidence type="ECO:0000312" key="16">
    <source>
        <dbReference type="EMBL" id="AAQ89304.1"/>
    </source>
</evidence>
<evidence type="ECO:0000312" key="17">
    <source>
        <dbReference type="HGNC" id="HGNC:10589"/>
    </source>
</evidence>
<evidence type="ECO:0000312" key="18">
    <source>
        <dbReference type="PDB" id="5FDY"/>
    </source>
</evidence>
<evidence type="ECO:0000312" key="19">
    <source>
        <dbReference type="PDB" id="5FEB"/>
    </source>
</evidence>
<evidence type="ECO:0000312" key="20">
    <source>
        <dbReference type="PDB" id="6J8E"/>
    </source>
</evidence>
<evidence type="ECO:0000312" key="21">
    <source>
        <dbReference type="PDB" id="6J8G"/>
    </source>
</evidence>
<evidence type="ECO:0000312" key="22">
    <source>
        <dbReference type="PDB" id="6J8H"/>
    </source>
</evidence>
<evidence type="ECO:0000312" key="23">
    <source>
        <dbReference type="PDB" id="6J8I"/>
    </source>
</evidence>
<evidence type="ECO:0000312" key="24">
    <source>
        <dbReference type="PDB" id="6J8J"/>
    </source>
</evidence>
<evidence type="ECO:0007744" key="25">
    <source>
        <dbReference type="PDB" id="5FDY"/>
    </source>
</evidence>
<evidence type="ECO:0007744" key="26">
    <source>
        <dbReference type="PDB" id="5FEB"/>
    </source>
</evidence>
<evidence type="ECO:0007744" key="27">
    <source>
        <dbReference type="PDB" id="6J8E"/>
    </source>
</evidence>
<evidence type="ECO:0007744" key="28">
    <source>
        <dbReference type="PDB" id="6J8G"/>
    </source>
</evidence>
<evidence type="ECO:0007744" key="29">
    <source>
        <dbReference type="PDB" id="6J8H"/>
    </source>
</evidence>
<evidence type="ECO:0007744" key="30">
    <source>
        <dbReference type="PDB" id="6J8I"/>
    </source>
</evidence>
<evidence type="ECO:0007744" key="31">
    <source>
        <dbReference type="PDB" id="6J8J"/>
    </source>
</evidence>
<evidence type="ECO:0007744" key="32">
    <source>
        <dbReference type="PDB" id="7W77"/>
    </source>
</evidence>
<evidence type="ECO:0007744" key="33">
    <source>
        <dbReference type="PDB" id="7W7F"/>
    </source>
</evidence>
<evidence type="ECO:0007744" key="34">
    <source>
        <dbReference type="PDB" id="8GZ1"/>
    </source>
</evidence>
<evidence type="ECO:0007744" key="35">
    <source>
        <dbReference type="PDB" id="8GZ2"/>
    </source>
</evidence>
<evidence type="ECO:0007829" key="36">
    <source>
        <dbReference type="PDB" id="5FEB"/>
    </source>
</evidence>
<evidence type="ECO:0007829" key="37">
    <source>
        <dbReference type="PDB" id="7W77"/>
    </source>
</evidence>
<evidence type="ECO:0007829" key="38">
    <source>
        <dbReference type="PDB" id="7XVF"/>
    </source>
</evidence>
<evidence type="ECO:0007829" key="39">
    <source>
        <dbReference type="PDB" id="8I5Y"/>
    </source>
</evidence>
<evidence type="ECO:0007829" key="40">
    <source>
        <dbReference type="PDB" id="8XMN"/>
    </source>
</evidence>
<name>SCN2B_HUMAN</name>
<proteinExistence type="evidence at protein level"/>
<protein>
    <recommendedName>
        <fullName evidence="13">Sodium channel regulatory subunit beta-2</fullName>
    </recommendedName>
</protein>
<gene>
    <name evidence="17" type="primary">SCN2B</name>
    <name evidence="16" type="ORF">UNQ326/PRO386</name>
</gene>
<organism>
    <name type="scientific">Homo sapiens</name>
    <name type="common">Human</name>
    <dbReference type="NCBI Taxonomy" id="9606"/>
    <lineage>
        <taxon>Eukaryota</taxon>
        <taxon>Metazoa</taxon>
        <taxon>Chordata</taxon>
        <taxon>Craniata</taxon>
        <taxon>Vertebrata</taxon>
        <taxon>Euteleostomi</taxon>
        <taxon>Mammalia</taxon>
        <taxon>Eutheria</taxon>
        <taxon>Euarchontoglires</taxon>
        <taxon>Primates</taxon>
        <taxon>Haplorrhini</taxon>
        <taxon>Catarrhini</taxon>
        <taxon>Hominidae</taxon>
        <taxon>Homo</taxon>
    </lineage>
</organism>
<sequence length="215" mass="24326">MHRDAWLPRPAFSLTGLSLFFSLVPPGRSMEVTVPATLNVLNGSDARLPCTFNSCYTVNHKQFSLNWTYQECNNCSEEMFLQFRMKIINLKLERFQDRVEFSGNPSKYDVSVMLRNVQPEDEGIYNCYIMNPPDRHRGHGKIHLQVLMEEPPERDSTVAVIVGASVGGFLAVVILVLMVVKCVRRKKEQKLSTDDLKTEEEGKTDGEGNPDDGAK</sequence>
<accession>O60939</accession>
<accession>O75302</accession>
<accession>Q9UNN3</accession>
<keyword id="KW-0002">3D-structure</keyword>
<keyword id="KW-1020">Atrial fibrillation</keyword>
<keyword id="KW-0992">Brugada syndrome</keyword>
<keyword id="KW-1003">Cell membrane</keyword>
<keyword id="KW-0966">Cell projection</keyword>
<keyword id="KW-0225">Disease variant</keyword>
<keyword id="KW-1015">Disulfide bond</keyword>
<keyword id="KW-0325">Glycoprotein</keyword>
<keyword id="KW-0393">Immunoglobulin domain</keyword>
<keyword id="KW-0406">Ion transport</keyword>
<keyword id="KW-0472">Membrane</keyword>
<keyword id="KW-0597">Phosphoprotein</keyword>
<keyword id="KW-1267">Proteomics identification</keyword>
<keyword id="KW-1185">Reference proteome</keyword>
<keyword id="KW-0732">Signal</keyword>
<keyword id="KW-0915">Sodium</keyword>
<keyword id="KW-0739">Sodium transport</keyword>
<keyword id="KW-0812">Transmembrane</keyword>
<keyword id="KW-1133">Transmembrane helix</keyword>
<keyword id="KW-0813">Transport</keyword>
<dbReference type="EMBL" id="AF007783">
    <property type="protein sequence ID" value="AAC26013.1"/>
    <property type="molecule type" value="mRNA"/>
</dbReference>
<dbReference type="EMBL" id="AF049498">
    <property type="protein sequence ID" value="AAC05274.1"/>
    <property type="molecule type" value="mRNA"/>
</dbReference>
<dbReference type="EMBL" id="AF049497">
    <property type="protein sequence ID" value="AAC05208.1"/>
    <property type="molecule type" value="Genomic_DNA"/>
</dbReference>
<dbReference type="EMBL" id="AF049496">
    <property type="protein sequence ID" value="AAC05208.1"/>
    <property type="status" value="JOINED"/>
    <property type="molecule type" value="Genomic_DNA"/>
</dbReference>
<dbReference type="EMBL" id="AF107028">
    <property type="protein sequence ID" value="AAD47196.1"/>
    <property type="molecule type" value="mRNA"/>
</dbReference>
<dbReference type="EMBL" id="U87555">
    <property type="protein sequence ID" value="AAF21472.1"/>
    <property type="molecule type" value="mRNA"/>
</dbReference>
<dbReference type="EMBL" id="AY358945">
    <property type="protein sequence ID" value="AAQ89304.1"/>
    <property type="molecule type" value="mRNA"/>
</dbReference>
<dbReference type="EMBL" id="BC036793">
    <property type="protein sequence ID" value="AAH36793.1"/>
    <property type="molecule type" value="mRNA"/>
</dbReference>
<dbReference type="CCDS" id="CCDS8390.1"/>
<dbReference type="RefSeq" id="NP_004579.1">
    <property type="nucleotide sequence ID" value="NM_004588.5"/>
</dbReference>
<dbReference type="PDB" id="5FDY">
    <property type="method" value="X-ray"/>
    <property type="resolution" value="1.85 A"/>
    <property type="chains" value="A/B=30-153"/>
</dbReference>
<dbReference type="PDB" id="5FEB">
    <property type="method" value="X-ray"/>
    <property type="resolution" value="1.35 A"/>
    <property type="chains" value="A=30-151"/>
</dbReference>
<dbReference type="PDB" id="6J8E">
    <property type="method" value="EM"/>
    <property type="resolution" value="3.00 A"/>
    <property type="chains" value="C=27-148"/>
</dbReference>
<dbReference type="PDB" id="6J8G">
    <property type="method" value="EM"/>
    <property type="resolution" value="3.20 A"/>
    <property type="chains" value="C=1-215"/>
</dbReference>
<dbReference type="PDB" id="6J8H">
    <property type="method" value="EM"/>
    <property type="resolution" value="3.20 A"/>
    <property type="chains" value="C=1-215"/>
</dbReference>
<dbReference type="PDB" id="6J8I">
    <property type="method" value="EM"/>
    <property type="resolution" value="3.20 A"/>
    <property type="chains" value="C=1-215"/>
</dbReference>
<dbReference type="PDB" id="6J8J">
    <property type="method" value="EM"/>
    <property type="resolution" value="3.20 A"/>
    <property type="chains" value="C=1-215"/>
</dbReference>
<dbReference type="PDB" id="6VRR">
    <property type="method" value="X-ray"/>
    <property type="resolution" value="1.45 A"/>
    <property type="chains" value="A=30-153"/>
</dbReference>
<dbReference type="PDB" id="7W77">
    <property type="method" value="EM"/>
    <property type="resolution" value="3.30 A"/>
    <property type="chains" value="C=1-215"/>
</dbReference>
<dbReference type="PDB" id="7W7F">
    <property type="method" value="EM"/>
    <property type="resolution" value="3.35 A"/>
    <property type="chains" value="C=1-215"/>
</dbReference>
<dbReference type="PDB" id="7W9K">
    <property type="method" value="EM"/>
    <property type="resolution" value="2.20 A"/>
    <property type="chains" value="C=1-215"/>
</dbReference>
<dbReference type="PDB" id="7W9L">
    <property type="method" value="EM"/>
    <property type="resolution" value="3.50 A"/>
    <property type="chains" value="C=1-215"/>
</dbReference>
<dbReference type="PDB" id="7W9M">
    <property type="method" value="EM"/>
    <property type="resolution" value="3.00 A"/>
    <property type="chains" value="C=1-215"/>
</dbReference>
<dbReference type="PDB" id="7W9P">
    <property type="method" value="EM"/>
    <property type="resolution" value="2.90 A"/>
    <property type="chains" value="C=1-215"/>
</dbReference>
<dbReference type="PDB" id="7W9T">
    <property type="method" value="EM"/>
    <property type="resolution" value="3.00 A"/>
    <property type="chains" value="C=1-215"/>
</dbReference>
<dbReference type="PDB" id="7XM9">
    <property type="method" value="EM"/>
    <property type="resolution" value="3.22 A"/>
    <property type="chains" value="C=1-215"/>
</dbReference>
<dbReference type="PDB" id="7XMF">
    <property type="method" value="EM"/>
    <property type="resolution" value="3.07 A"/>
    <property type="chains" value="C=1-215"/>
</dbReference>
<dbReference type="PDB" id="7XMG">
    <property type="method" value="EM"/>
    <property type="resolution" value="3.09 A"/>
    <property type="chains" value="F=1-215"/>
</dbReference>
<dbReference type="PDB" id="7XVE">
    <property type="method" value="EM"/>
    <property type="resolution" value="2.70 A"/>
    <property type="chains" value="C=1-215"/>
</dbReference>
<dbReference type="PDB" id="7XVF">
    <property type="method" value="EM"/>
    <property type="resolution" value="2.80 A"/>
    <property type="chains" value="C=1-215"/>
</dbReference>
<dbReference type="PDB" id="8G1A">
    <property type="method" value="EM"/>
    <property type="resolution" value="2.80 A"/>
    <property type="chains" value="C=1-215"/>
</dbReference>
<dbReference type="PDB" id="8GZ1">
    <property type="method" value="EM"/>
    <property type="resolution" value="3.40 A"/>
    <property type="chains" value="C=1-215"/>
</dbReference>
<dbReference type="PDB" id="8GZ2">
    <property type="method" value="EM"/>
    <property type="resolution" value="3.30 A"/>
    <property type="chains" value="C=1-215"/>
</dbReference>
<dbReference type="PDB" id="8I5B">
    <property type="method" value="EM"/>
    <property type="resolution" value="2.70 A"/>
    <property type="chains" value="C=1-215"/>
</dbReference>
<dbReference type="PDB" id="8I5G">
    <property type="method" value="EM"/>
    <property type="resolution" value="2.70 A"/>
    <property type="chains" value="C=1-215"/>
</dbReference>
<dbReference type="PDB" id="8I5X">
    <property type="method" value="EM"/>
    <property type="resolution" value="2.90 A"/>
    <property type="chains" value="C=1-215"/>
</dbReference>
<dbReference type="PDB" id="8I5Y">
    <property type="method" value="EM"/>
    <property type="resolution" value="2.60 A"/>
    <property type="chains" value="C=1-215"/>
</dbReference>
<dbReference type="PDB" id="8S9B">
    <property type="method" value="EM"/>
    <property type="resolution" value="2.90 A"/>
    <property type="chains" value="C=1-215"/>
</dbReference>
<dbReference type="PDB" id="8S9C">
    <property type="method" value="EM"/>
    <property type="resolution" value="3.20 A"/>
    <property type="chains" value="C=1-215"/>
</dbReference>
<dbReference type="PDB" id="8THG">
    <property type="method" value="EM"/>
    <property type="resolution" value="2.90 A"/>
    <property type="chains" value="C=1-215"/>
</dbReference>
<dbReference type="PDB" id="8THH">
    <property type="method" value="EM"/>
    <property type="resolution" value="2.70 A"/>
    <property type="chains" value="C=1-215"/>
</dbReference>
<dbReference type="PDB" id="8XMN">
    <property type="method" value="EM"/>
    <property type="resolution" value="3.37 A"/>
    <property type="chains" value="C=1-215"/>
</dbReference>
<dbReference type="PDB" id="8XMO">
    <property type="method" value="EM"/>
    <property type="resolution" value="3.39 A"/>
    <property type="chains" value="C=1-215"/>
</dbReference>
<dbReference type="PDBsum" id="5FDY"/>
<dbReference type="PDBsum" id="5FEB"/>
<dbReference type="PDBsum" id="6J8E"/>
<dbReference type="PDBsum" id="6J8G"/>
<dbReference type="PDBsum" id="6J8H"/>
<dbReference type="PDBsum" id="6J8I"/>
<dbReference type="PDBsum" id="6J8J"/>
<dbReference type="PDBsum" id="6VRR"/>
<dbReference type="PDBsum" id="7W77"/>
<dbReference type="PDBsum" id="7W7F"/>
<dbReference type="PDBsum" id="7W9K"/>
<dbReference type="PDBsum" id="7W9L"/>
<dbReference type="PDBsum" id="7W9M"/>
<dbReference type="PDBsum" id="7W9P"/>
<dbReference type="PDBsum" id="7W9T"/>
<dbReference type="PDBsum" id="7XM9"/>
<dbReference type="PDBsum" id="7XMF"/>
<dbReference type="PDBsum" id="7XMG"/>
<dbReference type="PDBsum" id="7XVE"/>
<dbReference type="PDBsum" id="7XVF"/>
<dbReference type="PDBsum" id="8G1A"/>
<dbReference type="PDBsum" id="8GZ1"/>
<dbReference type="PDBsum" id="8GZ2"/>
<dbReference type="PDBsum" id="8I5B"/>
<dbReference type="PDBsum" id="8I5G"/>
<dbReference type="PDBsum" id="8I5X"/>
<dbReference type="PDBsum" id="8I5Y"/>
<dbReference type="PDBsum" id="8S9B"/>
<dbReference type="PDBsum" id="8S9C"/>
<dbReference type="PDBsum" id="8THG"/>
<dbReference type="PDBsum" id="8THH"/>
<dbReference type="PDBsum" id="8XMN"/>
<dbReference type="PDBsum" id="8XMO"/>
<dbReference type="EMDB" id="EMD-29665"/>
<dbReference type="EMDB" id="EMD-32341"/>
<dbReference type="EMDB" id="EMD-32343"/>
<dbReference type="EMDB" id="EMD-32368"/>
<dbReference type="EMDB" id="EMD-32369"/>
<dbReference type="EMDB" id="EMD-32370"/>
<dbReference type="EMDB" id="EMD-32371"/>
<dbReference type="EMDB" id="EMD-32372"/>
<dbReference type="EMDB" id="EMD-33292"/>
<dbReference type="EMDB" id="EMD-33295"/>
<dbReference type="EMDB" id="EMD-33296"/>
<dbReference type="EMDB" id="EMD-33484"/>
<dbReference type="EMDB" id="EMD-33485"/>
<dbReference type="EMDB" id="EMD-34387"/>
<dbReference type="EMDB" id="EMD-34388"/>
<dbReference type="EMDB" id="EMD-35193"/>
<dbReference type="EMDB" id="EMD-35194"/>
<dbReference type="EMDB" id="EMD-35197"/>
<dbReference type="EMDB" id="EMD-35198"/>
<dbReference type="EMDB" id="EMD-38483"/>
<dbReference type="EMDB" id="EMD-38484"/>
<dbReference type="EMDB" id="EMD-40238"/>
<dbReference type="EMDB" id="EMD-40239"/>
<dbReference type="EMDB" id="EMD-41261"/>
<dbReference type="EMDB" id="EMD-41262"/>
<dbReference type="EMDB" id="EMD-9781"/>
<dbReference type="EMDB" id="EMD-9782"/>
<dbReference type="SMR" id="O60939"/>
<dbReference type="BioGRID" id="112232">
    <property type="interactions" value="108"/>
</dbReference>
<dbReference type="ComplexPortal" id="CPX-8639">
    <property type="entry name" value="Nav1.1 voltage-gated sodium channel complex, SCN1B-SCN2B variant"/>
</dbReference>
<dbReference type="ComplexPortal" id="CPX-8640">
    <property type="entry name" value="Nav1.1 voltage-gated sodium channel complex, SCN2B-SCN3B variant"/>
</dbReference>
<dbReference type="ComplexPortal" id="CPX-8643">
    <property type="entry name" value="Nav1.2 voltage-gated sodium channel complex, SCN1B-SCN2B variant"/>
</dbReference>
<dbReference type="ComplexPortal" id="CPX-8644">
    <property type="entry name" value="Nav1.2 voltage-gated sodium channel complex, SCN2B-SCN3B variant"/>
</dbReference>
<dbReference type="ComplexPortal" id="CPX-8661">
    <property type="entry name" value="Nav1.3 voltage-gated sodium channel complex, SCN1B-SCN2B variant"/>
</dbReference>
<dbReference type="ComplexPortal" id="CPX-8662">
    <property type="entry name" value="Nav1.3 voltage-gated sodium channel complex, SCN2B-SCN3B variant"/>
</dbReference>
<dbReference type="ComplexPortal" id="CPX-8665">
    <property type="entry name" value="Nav1.4 voltage-gated sodium channel complex, SCN1B-SCN2B variant"/>
</dbReference>
<dbReference type="ComplexPortal" id="CPX-8667">
    <property type="entry name" value="Nav1.4 voltage-gated sodium channel complex, SCN2B-SCN3B variant"/>
</dbReference>
<dbReference type="ComplexPortal" id="CPX-8669">
    <property type="entry name" value="Nav1.5 voltage-gated sodium channel complex, SCN1B-SCN2B variant"/>
</dbReference>
<dbReference type="ComplexPortal" id="CPX-8671">
    <property type="entry name" value="Nav1.5 voltage-gated sodium channel complex, SCN2B-SCN3B variant"/>
</dbReference>
<dbReference type="ComplexPortal" id="CPX-8673">
    <property type="entry name" value="Nav1.6 voltage-gated sodium channel complex, SCN1B-SCN2B variant"/>
</dbReference>
<dbReference type="ComplexPortal" id="CPX-8676">
    <property type="entry name" value="Nav1.6 voltage-gated sodium channel complex, SCN2B-SCN3B variant"/>
</dbReference>
<dbReference type="ComplexPortal" id="CPX-8677">
    <property type="entry name" value="Nav1.7 voltage-gated sodium channel complex, SCN1B-SCN2B variant"/>
</dbReference>
<dbReference type="ComplexPortal" id="CPX-8680">
    <property type="entry name" value="Nav1.7 voltage-gated sodium channel complex, SCN2B-SCN3B variant"/>
</dbReference>
<dbReference type="ComplexPortal" id="CPX-8681">
    <property type="entry name" value="Nav1.8 voltage-gated sodium channel complex, SCN1B-SCN2B variant"/>
</dbReference>
<dbReference type="ComplexPortal" id="CPX-8684">
    <property type="entry name" value="Nav1.8 voltage-gated sodium channel complex, SCN2B-SCN3B variant"/>
</dbReference>
<dbReference type="ComplexPortal" id="CPX-8685">
    <property type="entry name" value="Nav1.9 voltage-gated sodium channel complex, SCN1B-SCN2B variant"/>
</dbReference>
<dbReference type="ComplexPortal" id="CPX-8690">
    <property type="entry name" value="Nav1.9 voltage-gated sodium channel complex, SCN2B-SCN3B variant"/>
</dbReference>
<dbReference type="ComplexPortal" id="CPX-8691">
    <property type="entry name" value="Nax cation channel complex, SCN2B-SCN3B variant"/>
</dbReference>
<dbReference type="ComplexPortal" id="CPX-8694">
    <property type="entry name" value="Nax cation channel complex, SCN1B-SCN2B variant"/>
</dbReference>
<dbReference type="CORUM" id="O60939"/>
<dbReference type="FunCoup" id="O60939">
    <property type="interactions" value="332"/>
</dbReference>
<dbReference type="IntAct" id="O60939">
    <property type="interactions" value="73"/>
</dbReference>
<dbReference type="MINT" id="O60939"/>
<dbReference type="STRING" id="9606.ENSP00000278947"/>
<dbReference type="BindingDB" id="O60939"/>
<dbReference type="ChEMBL" id="CHEMBL5446"/>
<dbReference type="DrugBank" id="DB05541">
    <property type="generic name" value="Brivaracetam"/>
</dbReference>
<dbReference type="DrugBank" id="DB00907">
    <property type="generic name" value="Cocaine"/>
</dbReference>
<dbReference type="DrugBank" id="DB13269">
    <property type="generic name" value="Dichlorobenzyl alcohol"/>
</dbReference>
<dbReference type="DrugBank" id="DB13961">
    <property type="generic name" value="Fish oil"/>
</dbReference>
<dbReference type="DrugBank" id="DB00776">
    <property type="generic name" value="Oxcarbazepine"/>
</dbReference>
<dbReference type="DrugBank" id="DB00243">
    <property type="generic name" value="Ranolazine"/>
</dbReference>
<dbReference type="DrugBank" id="DB00313">
    <property type="generic name" value="Valproic acid"/>
</dbReference>
<dbReference type="DrugBank" id="DB00909">
    <property type="generic name" value="Zonisamide"/>
</dbReference>
<dbReference type="DrugCentral" id="O60939"/>
<dbReference type="TCDB" id="8.A.17.2.1">
    <property type="family name" value="the na(+) channel auxiliary subunit Beta1-Beta4 (sca-Beta) family"/>
</dbReference>
<dbReference type="GlyCosmos" id="O60939">
    <property type="glycosylation" value="3 sites, No reported glycans"/>
</dbReference>
<dbReference type="GlyGen" id="O60939">
    <property type="glycosylation" value="3 sites"/>
</dbReference>
<dbReference type="iPTMnet" id="O60939"/>
<dbReference type="PhosphoSitePlus" id="O60939"/>
<dbReference type="BioMuta" id="SCN2B"/>
<dbReference type="MassIVE" id="O60939"/>
<dbReference type="PaxDb" id="9606-ENSP00000278947"/>
<dbReference type="PeptideAtlas" id="O60939"/>
<dbReference type="ProteomicsDB" id="49682"/>
<dbReference type="Antibodypedia" id="2511">
    <property type="antibodies" value="291 antibodies from 34 providers"/>
</dbReference>
<dbReference type="DNASU" id="6327"/>
<dbReference type="Ensembl" id="ENST00000278947.6">
    <property type="protein sequence ID" value="ENSP00000278947.5"/>
    <property type="gene ID" value="ENSG00000149575.9"/>
</dbReference>
<dbReference type="GeneID" id="6327"/>
<dbReference type="KEGG" id="hsa:6327"/>
<dbReference type="MANE-Select" id="ENST00000278947.6">
    <property type="protein sequence ID" value="ENSP00000278947.5"/>
    <property type="RefSeq nucleotide sequence ID" value="NM_004588.5"/>
    <property type="RefSeq protein sequence ID" value="NP_004579.1"/>
</dbReference>
<dbReference type="AGR" id="HGNC:10589"/>
<dbReference type="CTD" id="6327"/>
<dbReference type="DisGeNET" id="6327"/>
<dbReference type="GeneCards" id="SCN2B"/>
<dbReference type="GeneReviews" id="SCN2B"/>
<dbReference type="HGNC" id="HGNC:10589">
    <property type="gene designation" value="SCN2B"/>
</dbReference>
<dbReference type="HPA" id="ENSG00000149575">
    <property type="expression patterns" value="Tissue enhanced (brain, heart muscle)"/>
</dbReference>
<dbReference type="MalaCards" id="SCN2B"/>
<dbReference type="MIM" id="601327">
    <property type="type" value="gene"/>
</dbReference>
<dbReference type="MIM" id="615378">
    <property type="type" value="phenotype"/>
</dbReference>
<dbReference type="neXtProt" id="NX_O60939"/>
<dbReference type="OpenTargets" id="ENSG00000149575"/>
<dbReference type="Orphanet" id="130">
    <property type="disease" value="Brugada syndrome"/>
</dbReference>
<dbReference type="Orphanet" id="334">
    <property type="disease" value="Familial atrial fibrillation"/>
</dbReference>
<dbReference type="PharmGKB" id="PA303"/>
<dbReference type="VEuPathDB" id="HostDB:ENSG00000149575"/>
<dbReference type="eggNOG" id="ENOG502R29H">
    <property type="taxonomic scope" value="Eukaryota"/>
</dbReference>
<dbReference type="GeneTree" id="ENSGT01030000234556"/>
<dbReference type="HOGENOM" id="CLU_090350_0_0_1"/>
<dbReference type="InParanoid" id="O60939"/>
<dbReference type="OMA" id="RLACTFN"/>
<dbReference type="OrthoDB" id="8750716at2759"/>
<dbReference type="PAN-GO" id="O60939">
    <property type="GO annotations" value="6 GO annotations based on evolutionary models"/>
</dbReference>
<dbReference type="PhylomeDB" id="O60939"/>
<dbReference type="TreeFam" id="TF331728"/>
<dbReference type="PathwayCommons" id="O60939"/>
<dbReference type="Reactome" id="R-HSA-445095">
    <property type="pathway name" value="Interaction between L1 and Ankyrins"/>
</dbReference>
<dbReference type="Reactome" id="R-HSA-5576892">
    <property type="pathway name" value="Phase 0 - rapid depolarisation"/>
</dbReference>
<dbReference type="Reactome" id="R-HSA-9717207">
    <property type="pathway name" value="Sensory perception of sweet, bitter, and umami (glutamate) taste"/>
</dbReference>
<dbReference type="SignaLink" id="O60939"/>
<dbReference type="BioGRID-ORCS" id="6327">
    <property type="hits" value="9 hits in 1162 CRISPR screens"/>
</dbReference>
<dbReference type="ChiTaRS" id="SCN2B">
    <property type="organism name" value="human"/>
</dbReference>
<dbReference type="EvolutionaryTrace" id="O60939"/>
<dbReference type="GeneWiki" id="SCN2B"/>
<dbReference type="GenomeRNAi" id="6327"/>
<dbReference type="Pharos" id="O60939">
    <property type="development level" value="Tbio"/>
</dbReference>
<dbReference type="PRO" id="PR:O60939"/>
<dbReference type="Proteomes" id="UP000005640">
    <property type="component" value="Chromosome 11"/>
</dbReference>
<dbReference type="RNAct" id="O60939">
    <property type="molecule type" value="protein"/>
</dbReference>
<dbReference type="Bgee" id="ENSG00000149575">
    <property type="expression patterns" value="Expressed in middle temporal gyrus and 143 other cell types or tissues"/>
</dbReference>
<dbReference type="ExpressionAtlas" id="O60939">
    <property type="expression patterns" value="baseline and differential"/>
</dbReference>
<dbReference type="GO" id="GO:0043194">
    <property type="term" value="C:axon initial segment"/>
    <property type="evidence" value="ECO:0007669"/>
    <property type="project" value="Ensembl"/>
</dbReference>
<dbReference type="GO" id="GO:0033268">
    <property type="term" value="C:node of Ranvier"/>
    <property type="evidence" value="ECO:0007669"/>
    <property type="project" value="Ensembl"/>
</dbReference>
<dbReference type="GO" id="GO:0005886">
    <property type="term" value="C:plasma membrane"/>
    <property type="evidence" value="ECO:0000314"/>
    <property type="project" value="UniProtKB"/>
</dbReference>
<dbReference type="GO" id="GO:0045202">
    <property type="term" value="C:synapse"/>
    <property type="evidence" value="ECO:0007669"/>
    <property type="project" value="GOC"/>
</dbReference>
<dbReference type="GO" id="GO:0030315">
    <property type="term" value="C:T-tubule"/>
    <property type="evidence" value="ECO:0007669"/>
    <property type="project" value="Ensembl"/>
</dbReference>
<dbReference type="GO" id="GO:0001518">
    <property type="term" value="C:voltage-gated sodium channel complex"/>
    <property type="evidence" value="ECO:0000314"/>
    <property type="project" value="UniProtKB"/>
</dbReference>
<dbReference type="GO" id="GO:0017080">
    <property type="term" value="F:sodium channel regulator activity"/>
    <property type="evidence" value="ECO:0000314"/>
    <property type="project" value="BHF-UCL"/>
</dbReference>
<dbReference type="GO" id="GO:1902282">
    <property type="term" value="F:voltage-gated potassium channel activity involved in ventricular cardiac muscle cell action potential repolarization"/>
    <property type="evidence" value="ECO:0007669"/>
    <property type="project" value="Ensembl"/>
</dbReference>
<dbReference type="GO" id="GO:0086006">
    <property type="term" value="F:voltage-gated sodium channel activity involved in cardiac muscle cell action potential"/>
    <property type="evidence" value="ECO:0007669"/>
    <property type="project" value="Ensembl"/>
</dbReference>
<dbReference type="GO" id="GO:0061337">
    <property type="term" value="P:cardiac conduction"/>
    <property type="evidence" value="ECO:0000318"/>
    <property type="project" value="GO_Central"/>
</dbReference>
<dbReference type="GO" id="GO:0086002">
    <property type="term" value="P:cardiac muscle cell action potential involved in contraction"/>
    <property type="evidence" value="ECO:0000315"/>
    <property type="project" value="BHF-UCL"/>
</dbReference>
<dbReference type="GO" id="GO:0060048">
    <property type="term" value="P:cardiac muscle contraction"/>
    <property type="evidence" value="ECO:0000315"/>
    <property type="project" value="BHF-UCL"/>
</dbReference>
<dbReference type="GO" id="GO:0007268">
    <property type="term" value="P:chemical synaptic transmission"/>
    <property type="evidence" value="ECO:0000304"/>
    <property type="project" value="ProtInc"/>
</dbReference>
<dbReference type="GO" id="GO:0010467">
    <property type="term" value="P:gene expression"/>
    <property type="evidence" value="ECO:0007669"/>
    <property type="project" value="Ensembl"/>
</dbReference>
<dbReference type="GO" id="GO:0086010">
    <property type="term" value="P:membrane depolarization during action potential"/>
    <property type="evidence" value="ECO:0000314"/>
    <property type="project" value="UniProtKB"/>
</dbReference>
<dbReference type="GO" id="GO:0086012">
    <property type="term" value="P:membrane depolarization during cardiac muscle cell action potential"/>
    <property type="evidence" value="ECO:0000315"/>
    <property type="project" value="BHF-UCL"/>
</dbReference>
<dbReference type="GO" id="GO:0007399">
    <property type="term" value="P:nervous system development"/>
    <property type="evidence" value="ECO:0007669"/>
    <property type="project" value="Ensembl"/>
</dbReference>
<dbReference type="GO" id="GO:0010765">
    <property type="term" value="P:positive regulation of sodium ion transport"/>
    <property type="evidence" value="ECO:0000314"/>
    <property type="project" value="BHF-UCL"/>
</dbReference>
<dbReference type="GO" id="GO:0060371">
    <property type="term" value="P:regulation of atrial cardiac muscle cell membrane depolarization"/>
    <property type="evidence" value="ECO:0000315"/>
    <property type="project" value="BHF-UCL"/>
</dbReference>
<dbReference type="GO" id="GO:0086091">
    <property type="term" value="P:regulation of heart rate by cardiac conduction"/>
    <property type="evidence" value="ECO:0000315"/>
    <property type="project" value="BHF-UCL"/>
</dbReference>
<dbReference type="GO" id="GO:0009408">
    <property type="term" value="P:response to heat"/>
    <property type="evidence" value="ECO:0007669"/>
    <property type="project" value="Ensembl"/>
</dbReference>
<dbReference type="GO" id="GO:0046684">
    <property type="term" value="P:response to pyrethroid"/>
    <property type="evidence" value="ECO:0007669"/>
    <property type="project" value="Ensembl"/>
</dbReference>
<dbReference type="CDD" id="cd05715">
    <property type="entry name" value="IgV_P0-like"/>
    <property type="match status" value="1"/>
</dbReference>
<dbReference type="FunFam" id="2.60.40.10:FF:001092">
    <property type="entry name" value="Sodium channel subunit beta-2"/>
    <property type="match status" value="1"/>
</dbReference>
<dbReference type="Gene3D" id="2.60.40.10">
    <property type="entry name" value="Immunoglobulins"/>
    <property type="match status" value="1"/>
</dbReference>
<dbReference type="InterPro" id="IPR007110">
    <property type="entry name" value="Ig-like_dom"/>
</dbReference>
<dbReference type="InterPro" id="IPR036179">
    <property type="entry name" value="Ig-like_dom_sf"/>
</dbReference>
<dbReference type="InterPro" id="IPR013783">
    <property type="entry name" value="Ig-like_fold"/>
</dbReference>
<dbReference type="InterPro" id="IPR003599">
    <property type="entry name" value="Ig_sub"/>
</dbReference>
<dbReference type="InterPro" id="IPR013106">
    <property type="entry name" value="Ig_V-set"/>
</dbReference>
<dbReference type="InterPro" id="IPR000920">
    <property type="entry name" value="Myelin_P0-rel"/>
</dbReference>
<dbReference type="PANTHER" id="PTHR13869">
    <property type="entry name" value="MYELIN P0 RELATED"/>
    <property type="match status" value="1"/>
</dbReference>
<dbReference type="PANTHER" id="PTHR13869:SF3">
    <property type="entry name" value="SODIUM CHANNEL SUBUNIT BETA-2"/>
    <property type="match status" value="1"/>
</dbReference>
<dbReference type="Pfam" id="PF07686">
    <property type="entry name" value="V-set"/>
    <property type="match status" value="1"/>
</dbReference>
<dbReference type="PRINTS" id="PR00213">
    <property type="entry name" value="MYELINP0"/>
</dbReference>
<dbReference type="SMART" id="SM00409">
    <property type="entry name" value="IG"/>
    <property type="match status" value="1"/>
</dbReference>
<dbReference type="SUPFAM" id="SSF48726">
    <property type="entry name" value="Immunoglobulin"/>
    <property type="match status" value="1"/>
</dbReference>
<dbReference type="PROSITE" id="PS50835">
    <property type="entry name" value="IG_LIKE"/>
    <property type="match status" value="1"/>
</dbReference>
<feature type="signal peptide" evidence="1">
    <location>
        <begin position="1"/>
        <end position="29"/>
    </location>
</feature>
<feature type="chain" id="PRO_0000014931" description="Sodium channel regulatory subunit beta-2">
    <location>
        <begin position="30"/>
        <end position="215"/>
    </location>
</feature>
<feature type="topological domain" description="Extracellular" evidence="11 35">
    <location>
        <begin position="30"/>
        <end position="157"/>
    </location>
</feature>
<feature type="transmembrane region" description="Helical" evidence="15 35">
    <location>
        <begin position="158"/>
        <end position="179"/>
    </location>
</feature>
<feature type="topological domain" description="Cytoplasmic" evidence="11 35">
    <location>
        <begin position="180"/>
        <end position="215"/>
    </location>
</feature>
<feature type="domain" description="Ig-like C2-type" evidence="2">
    <location>
        <begin position="32"/>
        <end position="154"/>
    </location>
</feature>
<feature type="region of interest" description="Disordered" evidence="3">
    <location>
        <begin position="187"/>
        <end position="215"/>
    </location>
</feature>
<feature type="compositionally biased region" description="Basic and acidic residues" evidence="3">
    <location>
        <begin position="189"/>
        <end position="215"/>
    </location>
</feature>
<feature type="site" description="Binds SCN2A" evidence="14">
    <location>
        <position position="56"/>
    </location>
</feature>
<feature type="site" description="Binds SCN2A" evidence="14">
    <location>
        <position position="135"/>
    </location>
</feature>
<feature type="modified residue" description="Phosphoserine" evidence="1">
    <location>
        <position position="192"/>
    </location>
</feature>
<feature type="modified residue" description="Phosphothreonine" evidence="1">
    <location>
        <position position="204"/>
    </location>
</feature>
<feature type="glycosylation site" description="N-linked (GlcNAc...) asparagine" evidence="2">
    <location>
        <position position="42"/>
    </location>
</feature>
<feature type="glycosylation site" description="N-linked (GlcNAc...) asparagine" evidence="9 28 29 30 31">
    <location>
        <position position="66"/>
    </location>
</feature>
<feature type="glycosylation site" description="N-linked (GlcNAc...) asparagine" evidence="2">
    <location>
        <position position="74"/>
    </location>
</feature>
<feature type="disulfide bond" evidence="7 8 9 10 11 25 26 27 28 29 30 31 32 33 34 35">
    <location>
        <begin position="50"/>
        <end position="127"/>
    </location>
</feature>
<feature type="disulfide bond" description="Interchain; with alpha subunit" evidence="7 8 9 10 27 28 29 30 31">
    <location>
        <position position="55"/>
    </location>
</feature>
<feature type="disulfide bond" evidence="7 8 9 10 11 25 26 27 28 29 30 31 32 33 34 35">
    <location>
        <begin position="72"/>
        <end position="75"/>
    </location>
</feature>
<feature type="sequence variant" id="VAR_070229" description="In ATFB14; the mutant results in reduced sodium currents and altered channel gating when coexpressed with SCN5A in a heterologous expression system; dbSNP:rs72544145." evidence="4">
    <original>R</original>
    <variation>Q</variation>
    <location>
        <position position="28"/>
    </location>
</feature>
<feature type="sequence variant" id="VAR_029131" description="In ATFB14; the mutant results in reduced sodium currents and altered channel gating when coexpressed with SCN5A in a heterologous expression system; dbSNP:rs17121819." evidence="4">
    <original>R</original>
    <variation>W</variation>
    <location>
        <position position="28"/>
    </location>
</feature>
<feature type="sequence variant" id="VAR_029132" description="In dbSNP:rs17121818.">
    <original>R</original>
    <variation>H</variation>
    <location>
        <position position="47"/>
    </location>
</feature>
<feature type="sequence variant" id="VAR_070230" description="Found in a patient with Brugada syndrome; uncertain significance; induces a reduction in sodium current density most likely by decreasing SCN5A protein cell surface expression; dbSNP:rs587777023." evidence="6">
    <original>D</original>
    <variation>G</variation>
    <location>
        <position position="211"/>
    </location>
</feature>
<feature type="mutagenesis site" description="Does not bind alpha subunit. Loss of ability to protect alpha subunit from inhibition by the spider protoxin-II." evidence="7">
    <original>C</original>
    <variation>A</variation>
    <variation>S</variation>
    <location>
        <position position="55"/>
    </location>
</feature>
<feature type="sequence conflict" description="In Ref. 1; AAC26013." evidence="12" ref="1">
    <original>H</original>
    <variation>Q</variation>
    <location>
        <position position="2"/>
    </location>
</feature>
<feature type="sequence conflict" description="In Ref. 1; AAC26013." evidence="12" ref="1">
    <original>P</original>
    <variation>L</variation>
    <location>
        <position position="8"/>
    </location>
</feature>
<feature type="sequence conflict" description="In Ref. 1; AAC26013." evidence="12" ref="1">
    <original>T</original>
    <variation>N</variation>
    <location>
        <position position="15"/>
    </location>
</feature>
<feature type="sequence conflict" description="In Ref. 1; AAC26013." evidence="12" ref="1">
    <original>L</original>
    <variation>Q</variation>
    <location>
        <position position="48"/>
    </location>
</feature>
<feature type="sequence conflict" description="In Ref. 1; AAC26013." evidence="12" ref="1">
    <original>T</original>
    <variation>S</variation>
    <location>
        <position position="68"/>
    </location>
</feature>
<feature type="sequence conflict" description="In Ref. 3; AAD47196." evidence="12" ref="3">
    <original>S</original>
    <variation>F</variation>
    <location>
        <position position="156"/>
    </location>
</feature>
<feature type="sequence conflict" description="In Ref. 1; AAC26013." evidence="12" ref="1">
    <original>MV</original>
    <variation>TA</variation>
    <location>
        <begin position="178"/>
        <end position="179"/>
    </location>
</feature>
<feature type="strand" evidence="39">
    <location>
        <begin position="31"/>
        <end position="33"/>
    </location>
</feature>
<feature type="strand" evidence="36">
    <location>
        <begin position="36"/>
        <end position="41"/>
    </location>
</feature>
<feature type="strand" evidence="36">
    <location>
        <begin position="46"/>
        <end position="48"/>
    </location>
</feature>
<feature type="strand" evidence="39">
    <location>
        <begin position="51"/>
        <end position="53"/>
    </location>
</feature>
<feature type="turn" evidence="36">
    <location>
        <begin position="60"/>
        <end position="62"/>
    </location>
</feature>
<feature type="strand" evidence="36">
    <location>
        <begin position="64"/>
        <end position="72"/>
    </location>
</feature>
<feature type="strand" evidence="37">
    <location>
        <begin position="73"/>
        <end position="75"/>
    </location>
</feature>
<feature type="strand" evidence="36">
    <location>
        <begin position="77"/>
        <end position="89"/>
    </location>
</feature>
<feature type="helix" evidence="36">
    <location>
        <begin position="93"/>
        <end position="95"/>
    </location>
</feature>
<feature type="turn" evidence="40">
    <location>
        <begin position="96"/>
        <end position="98"/>
    </location>
</feature>
<feature type="strand" evidence="36">
    <location>
        <begin position="99"/>
        <end position="101"/>
    </location>
</feature>
<feature type="helix" evidence="36">
    <location>
        <begin position="105"/>
        <end position="107"/>
    </location>
</feature>
<feature type="strand" evidence="36">
    <location>
        <begin position="112"/>
        <end position="114"/>
    </location>
</feature>
<feature type="helix" evidence="36">
    <location>
        <begin position="119"/>
        <end position="121"/>
    </location>
</feature>
<feature type="strand" evidence="36">
    <location>
        <begin position="123"/>
        <end position="130"/>
    </location>
</feature>
<feature type="strand" evidence="38">
    <location>
        <begin position="134"/>
        <end position="137"/>
    </location>
</feature>
<feature type="strand" evidence="36">
    <location>
        <begin position="138"/>
        <end position="147"/>
    </location>
</feature>
<reference key="1">
    <citation type="journal article" date="1997" name="NeuroReport">
        <title>Structure and chromosomal localization of the beta2 subunit of the human brain sodium channel.</title>
        <authorList>
            <person name="Eubanks J."/>
            <person name="Srinivasan J."/>
            <person name="Dinulos M.B."/>
            <person name="Disteche C.M."/>
            <person name="Catterall W.A."/>
        </authorList>
    </citation>
    <scope>NUCLEOTIDE SEQUENCE [MRNA]</scope>
    <source>
        <tissue>Brain</tissue>
    </source>
</reference>
<reference key="2">
    <citation type="journal article" date="1998" name="Eur. J. Hum. Genet.">
        <title>Exclusion of the SCN2B gene as candidate for CMT4B.</title>
        <authorList>
            <person name="Bolino A."/>
            <person name="Seri M."/>
            <person name="Caroli F."/>
            <person name="Eubanks J."/>
            <person name="Srinivasan J."/>
            <person name="Mandich P."/>
            <person name="Schenone A."/>
            <person name="Quattrone A."/>
            <person name="Romeo G."/>
            <person name="Catterall W.A."/>
            <person name="Devoto M."/>
        </authorList>
    </citation>
    <scope>NUCLEOTIDE SEQUENCE [GENOMIC DNA]</scope>
    <source>
        <tissue>Brain</tissue>
    </source>
</reference>
<reference key="3">
    <citation type="journal article" date="1999" name="Science">
        <title>Whether 'slip-mode conductance' occurs.</title>
        <authorList>
            <person name="Cruz J.S."/>
            <person name="Santana L.F."/>
            <person name="Frederick C.A."/>
            <person name="Isom L.L."/>
            <person name="Malhotra J.D."/>
            <person name="Mattei L.N."/>
            <person name="Kass R.S."/>
            <person name="Xia J."/>
            <person name="An R.-H."/>
            <person name="Lederer W.J."/>
        </authorList>
    </citation>
    <scope>NUCLEOTIDE SEQUENCE [MRNA]</scope>
    <source>
        <tissue>Heart</tissue>
    </source>
</reference>
<reference key="4">
    <citation type="submission" date="1997-01" db="EMBL/GenBank/DDBJ databases">
        <title>Primary structure and functional expression of a beta 2 subunit of human infant brain sodium channels.</title>
        <authorList>
            <person name="Isom L.L."/>
            <person name="Mattei L.N."/>
            <person name="Ragsdale D.S."/>
        </authorList>
    </citation>
    <scope>NUCLEOTIDE SEQUENCE [MRNA]</scope>
</reference>
<reference key="5">
    <citation type="journal article" date="2003" name="Genome Res.">
        <title>The secreted protein discovery initiative (SPDI), a large-scale effort to identify novel human secreted and transmembrane proteins: a bioinformatics assessment.</title>
        <authorList>
            <person name="Clark H.F."/>
            <person name="Gurney A.L."/>
            <person name="Abaya E."/>
            <person name="Baker K."/>
            <person name="Baldwin D.T."/>
            <person name="Brush J."/>
            <person name="Chen J."/>
            <person name="Chow B."/>
            <person name="Chui C."/>
            <person name="Crowley C."/>
            <person name="Currell B."/>
            <person name="Deuel B."/>
            <person name="Dowd P."/>
            <person name="Eaton D."/>
            <person name="Foster J.S."/>
            <person name="Grimaldi C."/>
            <person name="Gu Q."/>
            <person name="Hass P.E."/>
            <person name="Heldens S."/>
            <person name="Huang A."/>
            <person name="Kim H.S."/>
            <person name="Klimowski L."/>
            <person name="Jin Y."/>
            <person name="Johnson S."/>
            <person name="Lee J."/>
            <person name="Lewis L."/>
            <person name="Liao D."/>
            <person name="Mark M.R."/>
            <person name="Robbie E."/>
            <person name="Sanchez C."/>
            <person name="Schoenfeld J."/>
            <person name="Seshagiri S."/>
            <person name="Simmons L."/>
            <person name="Singh J."/>
            <person name="Smith V."/>
            <person name="Stinson J."/>
            <person name="Vagts A."/>
            <person name="Vandlen R.L."/>
            <person name="Watanabe C."/>
            <person name="Wieand D."/>
            <person name="Woods K."/>
            <person name="Xie M.-H."/>
            <person name="Yansura D.G."/>
            <person name="Yi S."/>
            <person name="Yu G."/>
            <person name="Yuan J."/>
            <person name="Zhang M."/>
            <person name="Zhang Z."/>
            <person name="Goddard A.D."/>
            <person name="Wood W.I."/>
            <person name="Godowski P.J."/>
            <person name="Gray A.M."/>
        </authorList>
    </citation>
    <scope>NUCLEOTIDE SEQUENCE [LARGE SCALE MRNA]</scope>
</reference>
<reference key="6">
    <citation type="journal article" date="2004" name="Genome Res.">
        <title>The status, quality, and expansion of the NIH full-length cDNA project: the Mammalian Gene Collection (MGC).</title>
        <authorList>
            <consortium name="The MGC Project Team"/>
        </authorList>
    </citation>
    <scope>NUCLEOTIDE SEQUENCE [LARGE SCALE MRNA]</scope>
    <source>
        <tissue>Brain</tissue>
    </source>
</reference>
<reference key="7">
    <citation type="journal article" date="2012" name="J. Biol. Chem.">
        <title>Identification of the cysteine residue responsible for disulfide linkage of Na+ channel alpha and beta2 subunits.</title>
        <authorList>
            <person name="Chen C."/>
            <person name="Calhoun J.D."/>
            <person name="Zhang Y."/>
            <person name="Lopez-Santiago L."/>
            <person name="Zhou N."/>
            <person name="Davis T.H."/>
            <person name="Salzer J.L."/>
            <person name="Isom L.L."/>
        </authorList>
    </citation>
    <scope>SUBUNIT</scope>
</reference>
<reference evidence="18 19" key="8">
    <citation type="journal article" date="2016" name="Elife">
        <title>Binary architecture of the Nav1.2-beta2 signaling complex.</title>
        <authorList>
            <person name="Das S."/>
            <person name="Gilchrist J."/>
            <person name="Bosmans F."/>
            <person name="Van Petegem F."/>
        </authorList>
    </citation>
    <scope>X-RAY CRYSTALLOGRAPHY (1.35 ANGSTROMS) OF 30-153</scope>
    <scope>FUNCTION</scope>
    <scope>SUBUNIT</scope>
    <scope>INTERACTION WITH SCN2A</scope>
    <scope>DISULFIDE BOND</scope>
    <scope>MUTAGENESIS OF CYS-55</scope>
</reference>
<reference evidence="21 22 23 24" key="9">
    <citation type="journal article" date="2019" name="Science">
        <title>Structures of human Nav1.7 channel in complex with auxiliary subunits and animal toxins.</title>
        <authorList>
            <person name="Shen H."/>
            <person name="Liu D."/>
            <person name="Wu K."/>
            <person name="Lei J."/>
            <person name="Yan N."/>
        </authorList>
    </citation>
    <scope>STRUCTURE BY ELECTRON MICROSCOPY (3.2 ANGSTROMS) IN COMPLEX WITH SCN9A; SCN1B; PROTOTOXIN-II; TETRODOTOXIN; HUWENTOXIN-IV AND SAXITOXIN</scope>
    <scope>FUNCTION</scope>
    <scope>GLYCOSYLATION AT ASN-66</scope>
    <scope>DISULFIDE BOND</scope>
</reference>
<reference evidence="20" key="10">
    <citation type="journal article" date="2019" name="Science">
        <title>Molecular basis for pore blockade of human Na+ channel Nav1.2 by the mu-conotoxin KIIIA.</title>
        <authorList>
            <person name="Pan X."/>
            <person name="Li Z."/>
            <person name="Huang X."/>
            <person name="Huang G."/>
            <person name="Gao S."/>
            <person name="Shen H."/>
            <person name="Liu L."/>
            <person name="Lei J."/>
            <person name="Yan N."/>
        </authorList>
    </citation>
    <scope>STRUCTURE BY ELECTRON MICROSCOPY (3.0 ANGSTROMS) IN COMPLEX WITH SCN2A AND MU-CONOTOXIN KIIIA</scope>
    <scope>FUNCTION</scope>
    <scope>SUBUNIT</scope>
    <scope>DISULFIDE BOND</scope>
</reference>
<reference evidence="32 33" key="11">
    <citation type="journal article" date="2022" name="Nat. Commun.">
        <title>Structural basis for modulation of human NaV1.3 by clinical drug and selective antagonist.</title>
        <authorList>
            <person name="Li X."/>
            <person name="Xu F."/>
            <person name="Xu H."/>
            <person name="Zhang S."/>
            <person name="Gao Y."/>
            <person name="Zhang H."/>
            <person name="Dong Y."/>
            <person name="Zheng Y."/>
            <person name="Yang B."/>
            <person name="Sun J."/>
            <person name="Zhang X.C."/>
            <person name="Zhao Y."/>
            <person name="Jiang D."/>
        </authorList>
    </citation>
    <scope>STRUCTURE BY ELECTRON MICROSCOPY (3.30 ANGSTROMS) IN COMPLEX WITH SCN1B AND SCN3A</scope>
    <scope>FUNCTION</scope>
    <scope>SUBCELLULAR LOCATION</scope>
    <scope>DISULFIDE BONDS</scope>
</reference>
<reference evidence="34 35" key="12">
    <citation type="journal article" date="2023" name="Nat. Commun.">
        <title>Structure of human NaV1.6 channel reveals Na+ selectivity and pore blockade by 4,9-anhydro-tetrodotoxin.</title>
        <authorList>
            <person name="Li Y."/>
            <person name="Yuan T."/>
            <person name="Huang B."/>
            <person name="Zhou F."/>
            <person name="Peng C."/>
            <person name="Li X."/>
            <person name="Qiu Y."/>
            <person name="Yang B."/>
            <person name="Zhao Y."/>
            <person name="Huang Z."/>
            <person name="Jiang D."/>
        </authorList>
    </citation>
    <scope>STRUCTURE BY ELECTRON MICROSCOPY (3.30 ANGSTROMS) IN COMPLEX WITH SCN8A; SCN1B; NA(+) AND INHIBITOR 4,9-ANHYDRO-TETRODOTOXIN</scope>
    <scope>FUNCTION</scope>
    <scope>SUBUNIT</scope>
    <scope>DISULFIDE BONDS</scope>
    <scope>TOPOLOGY</scope>
</reference>
<reference key="13">
    <citation type="journal article" date="2009" name="Circ. Arrhythm. Electrophysiol.">
        <title>Mutations in sodium channel beta1- and beta2-subunits associated with atrial fibrillation.</title>
        <authorList>
            <person name="Watanabe H."/>
            <person name="Darbar D."/>
            <person name="Kaiser D.W."/>
            <person name="Jiramongkolchai K."/>
            <person name="Chopra S."/>
            <person name="Donahue B.S."/>
            <person name="Kannankeril P.J."/>
            <person name="Roden D.M."/>
        </authorList>
    </citation>
    <scope>VARIANTS ATFB14 GLN-28 AND TRP-28</scope>
    <scope>CHARACTERIZATION OF VARIANTS ATFB14 GLN-28 AND TRP-28</scope>
    <scope>FUNCTION</scope>
    <scope>INTERACTION WITH SCN5A</scope>
</reference>
<reference key="14">
    <citation type="journal article" date="2013" name="Hum. Mutat.">
        <title>A missense mutation in the sodium channel beta2 subunit reveals SCN2B as a new candidate gene for Brugada syndrome.</title>
        <authorList>
            <person name="Riuro H."/>
            <person name="Beltran-Alvarez P."/>
            <person name="Tarradas A."/>
            <person name="Selga E."/>
            <person name="Campuzano O."/>
            <person name="Verges M."/>
            <person name="Pagans S."/>
            <person name="Iglesias A."/>
            <person name="Brugada J."/>
            <person name="Brugada P."/>
            <person name="Vazquez F.M."/>
            <person name="Perez G.J."/>
            <person name="Scornik F.S."/>
            <person name="Brugada R."/>
        </authorList>
    </citation>
    <scope>VARIANT GLY-211</scope>
    <scope>CHARACTERIZATION OF VARIANT GLY-211</scope>
    <scope>POSSIBLE INVOLVEMENT IN BRUGADA SYNDROME</scope>
    <scope>FUNCTION</scope>
</reference>
<comment type="function">
    <text evidence="4 6 7 8 9 10 11">Regulatory subunit of multiple voltage-gated sodium (Nav) channels directly mediating the depolarization of excitable membranes (PubMed:19808477, PubMed:23559163, PubMed:26894959, PubMed:30765605, PubMed:30765606, PubMed:35277491, PubMed:36823201). Navs, also called VGSCs (voltage-gated sodium channels) or VDSCs (voltage-dependent sodium channels), operate by switching between closed and open conformations depending on the voltage difference across the membrane. In the open conformation they allow Na(+) ions to selectively pass through the pore, along their electrochemical gradient. The influx of Na+ ions provokes membrane depolarization, initiating the propagation of electrical signals throughout cells and tissues (PubMed:19808477, PubMed:23559163, PubMed:26894959). The accessory beta subunits participate in localization and functional modulation of the Nav channels (PubMed:19808477, PubMed:23559163). Modulates the activity of SCN1A/Nav1.1, SCN2A/Nav1.2, SCN2A/Nav1.3, SCN5A/Nav1.5, SCN8A/Nav1.6, SCN9A/Nav1.7 and SCN10A/Nav1.8 (PubMed:19808477, PubMed:23559163, PubMed:26894959, PubMed:30765605, PubMed:30765606, PubMed:35277491, PubMed:36823201).</text>
</comment>
<comment type="subunit">
    <text evidence="1 4 5 7 8 9 10 11">A voltage-gated sodium (Nav) channel consists of an ion-conducting pore-forming alpha subunit functional on its own that is regulated by one or more beta subunits (PubMed:22992729). The beta subunit SCN2B is disulfide-linked to the pore-forming alpha subunit (PubMed:22992729). Interacts with SCN1A; regulatory subunit of SCN1A/Nav1.1 (PubMed:22992729). Interacts with SCN2A; regulatory subunit of SCN2A/Nav1.2 (PubMed:26894959, PubMed:30765605). Interacts with SCN3A; regulatory subunit of SCN3A/Nav1.3 (PubMed:35277491). Interacts with SCN5A; regulatory subunit of SCN5A/Nav1.5 (PubMed:19808477). Interacts with SCN8A; regulatory subunit of SCN8A/Nav1.6 (PubMed:36823201). Interacts with SCN9A; regulatory subunit of SCN9A/Nav1.7 (PubMed:30765606). Interacts with SCN10A; regulatory subunit of SCN10A/Nav1.8 (By similarity). Interacts with TNR; may play a crucial role in clustering and regulation of activity of SCN2B-containing Nav channels at nodes of Ranvier (By similarity).</text>
</comment>
<comment type="subcellular location">
    <subcellularLocation>
        <location evidence="10">Cell membrane</location>
        <topology evidence="11">Single-pass type I membrane protein</topology>
    </subcellularLocation>
    <subcellularLocation>
        <location evidence="1">Cell projection</location>
        <location evidence="1">Axon</location>
    </subcellularLocation>
    <text evidence="1">Clusters at the axon initial segment and node of Ranvier, the specialized neuronal subcellular domains involved in action potentials generation and propagation.</text>
</comment>
<comment type="disease" evidence="4">
    <disease id="DI-03856">
        <name>Atrial fibrillation, familial, 14</name>
        <acronym>ATFB14</acronym>
        <description>A familial form of atrial fibrillation, a common sustained cardiac rhythm disturbance. Atrial fibrillation is characterized by disorganized atrial electrical activity and ineffective atrial contraction promoting blood stasis in the atria and reduces ventricular filling. It can result in palpitations, syncope, thromboembolic stroke, and congestive heart failure.</description>
        <dbReference type="MIM" id="615378"/>
    </disease>
    <text>The disease is caused by variants affecting the gene represented in this entry.</text>
</comment>
<comment type="disease">
    <text evidence="6">Genetic variations in SCN2B may be involved in Brugada syndrome (PubMed:23559163). This tachyarrhythmia is characterized by right bundle branch block and ST segment elevation on an electrocardiogram (ECG). It can cause the ventricles to beat so fast that the blood is prevented from circulating efficiently in the body. When this situation occurs, the individual will faint and may die in a few minutes if the heart is not reset.</text>
</comment>
<comment type="similarity">
    <text evidence="12">Belongs to the sodium channel auxiliary subunit SCN2B (TC 8.A.17) family.</text>
</comment>